<gene>
    <name evidence="1" type="primary">dxs</name>
    <name type="ordered locus">NGK_0044</name>
</gene>
<feature type="chain" id="PRO_1000115753" description="1-deoxy-D-xylulose-5-phosphate synthase">
    <location>
        <begin position="1"/>
        <end position="637"/>
    </location>
</feature>
<feature type="binding site" evidence="1">
    <location>
        <position position="76"/>
    </location>
    <ligand>
        <name>thiamine diphosphate</name>
        <dbReference type="ChEBI" id="CHEBI:58937"/>
    </ligand>
</feature>
<feature type="binding site" evidence="1">
    <location>
        <begin position="117"/>
        <end position="119"/>
    </location>
    <ligand>
        <name>thiamine diphosphate</name>
        <dbReference type="ChEBI" id="CHEBI:58937"/>
    </ligand>
</feature>
<feature type="binding site" evidence="1">
    <location>
        <position position="148"/>
    </location>
    <ligand>
        <name>Mg(2+)</name>
        <dbReference type="ChEBI" id="CHEBI:18420"/>
    </ligand>
</feature>
<feature type="binding site" evidence="1">
    <location>
        <begin position="149"/>
        <end position="150"/>
    </location>
    <ligand>
        <name>thiamine diphosphate</name>
        <dbReference type="ChEBI" id="CHEBI:58937"/>
    </ligand>
</feature>
<feature type="binding site" evidence="1">
    <location>
        <position position="177"/>
    </location>
    <ligand>
        <name>Mg(2+)</name>
        <dbReference type="ChEBI" id="CHEBI:18420"/>
    </ligand>
</feature>
<feature type="binding site" evidence="1">
    <location>
        <position position="177"/>
    </location>
    <ligand>
        <name>thiamine diphosphate</name>
        <dbReference type="ChEBI" id="CHEBI:58937"/>
    </ligand>
</feature>
<feature type="binding site" evidence="1">
    <location>
        <position position="294"/>
    </location>
    <ligand>
        <name>thiamine diphosphate</name>
        <dbReference type="ChEBI" id="CHEBI:58937"/>
    </ligand>
</feature>
<feature type="binding site" evidence="1">
    <location>
        <position position="381"/>
    </location>
    <ligand>
        <name>thiamine diphosphate</name>
        <dbReference type="ChEBI" id="CHEBI:58937"/>
    </ligand>
</feature>
<accession>B4RNW6</accession>
<reference key="1">
    <citation type="journal article" date="2008" name="J. Bacteriol.">
        <title>Complete genome sequence of Neisseria gonorrhoeae NCCP11945.</title>
        <authorList>
            <person name="Chung G.T."/>
            <person name="Yoo J.S."/>
            <person name="Oh H.B."/>
            <person name="Lee Y.S."/>
            <person name="Cha S.H."/>
            <person name="Kim S.J."/>
            <person name="Yoo C.K."/>
        </authorList>
    </citation>
    <scope>NUCLEOTIDE SEQUENCE [LARGE SCALE GENOMIC DNA]</scope>
    <source>
        <strain>NCCP11945</strain>
    </source>
</reference>
<name>DXS_NEIG2</name>
<dbReference type="EC" id="2.2.1.7" evidence="1"/>
<dbReference type="EMBL" id="CP001050">
    <property type="protein sequence ID" value="ACF28747.1"/>
    <property type="molecule type" value="Genomic_DNA"/>
</dbReference>
<dbReference type="RefSeq" id="WP_012503329.1">
    <property type="nucleotide sequence ID" value="NC_011035.1"/>
</dbReference>
<dbReference type="SMR" id="B4RNW6"/>
<dbReference type="KEGG" id="ngk:NGK_0044"/>
<dbReference type="HOGENOM" id="CLU_009227_1_4_4"/>
<dbReference type="UniPathway" id="UPA00064">
    <property type="reaction ID" value="UER00091"/>
</dbReference>
<dbReference type="Proteomes" id="UP000002564">
    <property type="component" value="Chromosome"/>
</dbReference>
<dbReference type="GO" id="GO:0005829">
    <property type="term" value="C:cytosol"/>
    <property type="evidence" value="ECO:0007669"/>
    <property type="project" value="TreeGrafter"/>
</dbReference>
<dbReference type="GO" id="GO:0008661">
    <property type="term" value="F:1-deoxy-D-xylulose-5-phosphate synthase activity"/>
    <property type="evidence" value="ECO:0007669"/>
    <property type="project" value="UniProtKB-UniRule"/>
</dbReference>
<dbReference type="GO" id="GO:0000287">
    <property type="term" value="F:magnesium ion binding"/>
    <property type="evidence" value="ECO:0007669"/>
    <property type="project" value="UniProtKB-UniRule"/>
</dbReference>
<dbReference type="GO" id="GO:0030976">
    <property type="term" value="F:thiamine pyrophosphate binding"/>
    <property type="evidence" value="ECO:0007669"/>
    <property type="project" value="UniProtKB-UniRule"/>
</dbReference>
<dbReference type="GO" id="GO:0052865">
    <property type="term" value="P:1-deoxy-D-xylulose 5-phosphate biosynthetic process"/>
    <property type="evidence" value="ECO:0007669"/>
    <property type="project" value="UniProtKB-UniPathway"/>
</dbReference>
<dbReference type="GO" id="GO:0019288">
    <property type="term" value="P:isopentenyl diphosphate biosynthetic process, methylerythritol 4-phosphate pathway"/>
    <property type="evidence" value="ECO:0007669"/>
    <property type="project" value="TreeGrafter"/>
</dbReference>
<dbReference type="GO" id="GO:0016114">
    <property type="term" value="P:terpenoid biosynthetic process"/>
    <property type="evidence" value="ECO:0007669"/>
    <property type="project" value="UniProtKB-UniRule"/>
</dbReference>
<dbReference type="GO" id="GO:0009228">
    <property type="term" value="P:thiamine biosynthetic process"/>
    <property type="evidence" value="ECO:0007669"/>
    <property type="project" value="UniProtKB-UniRule"/>
</dbReference>
<dbReference type="CDD" id="cd02007">
    <property type="entry name" value="TPP_DXS"/>
    <property type="match status" value="1"/>
</dbReference>
<dbReference type="CDD" id="cd07033">
    <property type="entry name" value="TPP_PYR_DXS_TK_like"/>
    <property type="match status" value="1"/>
</dbReference>
<dbReference type="FunFam" id="3.40.50.920:FF:000002">
    <property type="entry name" value="1-deoxy-D-xylulose-5-phosphate synthase"/>
    <property type="match status" value="1"/>
</dbReference>
<dbReference type="FunFam" id="3.40.50.970:FF:000005">
    <property type="entry name" value="1-deoxy-D-xylulose-5-phosphate synthase"/>
    <property type="match status" value="1"/>
</dbReference>
<dbReference type="Gene3D" id="3.40.50.920">
    <property type="match status" value="1"/>
</dbReference>
<dbReference type="Gene3D" id="3.40.50.970">
    <property type="match status" value="2"/>
</dbReference>
<dbReference type="HAMAP" id="MF_00315">
    <property type="entry name" value="DXP_synth"/>
    <property type="match status" value="1"/>
</dbReference>
<dbReference type="InterPro" id="IPR005477">
    <property type="entry name" value="Dxylulose-5-P_synthase"/>
</dbReference>
<dbReference type="InterPro" id="IPR029061">
    <property type="entry name" value="THDP-binding"/>
</dbReference>
<dbReference type="InterPro" id="IPR009014">
    <property type="entry name" value="Transketo_C/PFOR_II"/>
</dbReference>
<dbReference type="InterPro" id="IPR005475">
    <property type="entry name" value="Transketolase-like_Pyr-bd"/>
</dbReference>
<dbReference type="InterPro" id="IPR020826">
    <property type="entry name" value="Transketolase_BS"/>
</dbReference>
<dbReference type="InterPro" id="IPR033248">
    <property type="entry name" value="Transketolase_C"/>
</dbReference>
<dbReference type="InterPro" id="IPR049557">
    <property type="entry name" value="Transketolase_CS"/>
</dbReference>
<dbReference type="NCBIfam" id="TIGR00204">
    <property type="entry name" value="dxs"/>
    <property type="match status" value="1"/>
</dbReference>
<dbReference type="NCBIfam" id="NF003933">
    <property type="entry name" value="PRK05444.2-2"/>
    <property type="match status" value="1"/>
</dbReference>
<dbReference type="PANTHER" id="PTHR43322">
    <property type="entry name" value="1-D-DEOXYXYLULOSE 5-PHOSPHATE SYNTHASE-RELATED"/>
    <property type="match status" value="1"/>
</dbReference>
<dbReference type="PANTHER" id="PTHR43322:SF5">
    <property type="entry name" value="1-DEOXY-D-XYLULOSE-5-PHOSPHATE SYNTHASE, CHLOROPLASTIC"/>
    <property type="match status" value="1"/>
</dbReference>
<dbReference type="Pfam" id="PF13292">
    <property type="entry name" value="DXP_synthase_N"/>
    <property type="match status" value="1"/>
</dbReference>
<dbReference type="Pfam" id="PF02779">
    <property type="entry name" value="Transket_pyr"/>
    <property type="match status" value="1"/>
</dbReference>
<dbReference type="Pfam" id="PF02780">
    <property type="entry name" value="Transketolase_C"/>
    <property type="match status" value="1"/>
</dbReference>
<dbReference type="SMART" id="SM00861">
    <property type="entry name" value="Transket_pyr"/>
    <property type="match status" value="1"/>
</dbReference>
<dbReference type="SUPFAM" id="SSF52518">
    <property type="entry name" value="Thiamin diphosphate-binding fold (THDP-binding)"/>
    <property type="match status" value="2"/>
</dbReference>
<dbReference type="SUPFAM" id="SSF52922">
    <property type="entry name" value="TK C-terminal domain-like"/>
    <property type="match status" value="1"/>
</dbReference>
<dbReference type="PROSITE" id="PS00801">
    <property type="entry name" value="TRANSKETOLASE_1"/>
    <property type="match status" value="1"/>
</dbReference>
<dbReference type="PROSITE" id="PS00802">
    <property type="entry name" value="TRANSKETOLASE_2"/>
    <property type="match status" value="1"/>
</dbReference>
<comment type="function">
    <text evidence="1">Catalyzes the acyloin condensation reaction between C atoms 2 and 3 of pyruvate and glyceraldehyde 3-phosphate to yield 1-deoxy-D-xylulose-5-phosphate (DXP).</text>
</comment>
<comment type="catalytic activity">
    <reaction evidence="1">
        <text>D-glyceraldehyde 3-phosphate + pyruvate + H(+) = 1-deoxy-D-xylulose 5-phosphate + CO2</text>
        <dbReference type="Rhea" id="RHEA:12605"/>
        <dbReference type="ChEBI" id="CHEBI:15361"/>
        <dbReference type="ChEBI" id="CHEBI:15378"/>
        <dbReference type="ChEBI" id="CHEBI:16526"/>
        <dbReference type="ChEBI" id="CHEBI:57792"/>
        <dbReference type="ChEBI" id="CHEBI:59776"/>
        <dbReference type="EC" id="2.2.1.7"/>
    </reaction>
</comment>
<comment type="cofactor">
    <cofactor evidence="1">
        <name>Mg(2+)</name>
        <dbReference type="ChEBI" id="CHEBI:18420"/>
    </cofactor>
    <text evidence="1">Binds 1 Mg(2+) ion per subunit.</text>
</comment>
<comment type="cofactor">
    <cofactor evidence="1">
        <name>thiamine diphosphate</name>
        <dbReference type="ChEBI" id="CHEBI:58937"/>
    </cofactor>
    <text evidence="1">Binds 1 thiamine pyrophosphate per subunit.</text>
</comment>
<comment type="pathway">
    <text evidence="1">Metabolic intermediate biosynthesis; 1-deoxy-D-xylulose 5-phosphate biosynthesis; 1-deoxy-D-xylulose 5-phosphate from D-glyceraldehyde 3-phosphate and pyruvate: step 1/1.</text>
</comment>
<comment type="subunit">
    <text evidence="1">Homodimer.</text>
</comment>
<comment type="similarity">
    <text evidence="1">Belongs to the transketolase family. DXPS subfamily.</text>
</comment>
<evidence type="ECO:0000255" key="1">
    <source>
        <dbReference type="HAMAP-Rule" id="MF_00315"/>
    </source>
</evidence>
<sequence>MNPSPLLDLIDSPQDLRRLDKKQLPRLAGELRAFLLESVGQTGGHFASNLGAVELTIALHYVYDTPEDKLVWDVGHQSYPHKILTGRKNQMHTMRQYGGLAGFPKRCESEYDAFGVGHSSTSIGAALGMAATDKLLGGDRRSVAIIGDGAMTAGQAFEALNCAGDMDVDLLVVLNDNEMSISPNVGALPKYLASNVVRDMHGLLSTVKAQTGKVLDKIPGAMEFAQKVEHKIKTLAEEAEHAKQSLSLFENFGFRYTGPVDGHNVENLVDVLKDLRSRKGPQLLHVITKKGNGYKLAENDPVKYHAVANLPKEGGAQMPSEKEPKPAAKPTYTQVFGKWLCDRAAADSRLVAITPAMREGSGLVEFEQRFPDRYFDVGIAEQHAVTFAGGLACEGMKPVVAIYSTFLQRAYDQLVHDIALQNLPVLFAVDRAGIVGADGPTHAGLYDLSFLRCVPNMIVAAPSDENECRLLLSTCYQADAPAAVRYPRGTGTGAPVSDGMETVEIGKGIIRREGEKTAFIAFGSMVAPALAVAEKLNATVADMRFVKPIDEELIVRLARSHDRIVTLEENAEQGGAGGAVLEVLAKHGICKPVLLLGVADTVTEHGDPKKLLDDLGLSAEAVERRVREWLPDRDAAN</sequence>
<protein>
    <recommendedName>
        <fullName evidence="1">1-deoxy-D-xylulose-5-phosphate synthase</fullName>
        <ecNumber evidence="1">2.2.1.7</ecNumber>
    </recommendedName>
    <alternativeName>
        <fullName evidence="1">1-deoxyxylulose-5-phosphate synthase</fullName>
        <shortName evidence="1">DXP synthase</shortName>
        <shortName evidence="1">DXPS</shortName>
    </alternativeName>
</protein>
<organism>
    <name type="scientific">Neisseria gonorrhoeae (strain NCCP11945)</name>
    <dbReference type="NCBI Taxonomy" id="521006"/>
    <lineage>
        <taxon>Bacteria</taxon>
        <taxon>Pseudomonadati</taxon>
        <taxon>Pseudomonadota</taxon>
        <taxon>Betaproteobacteria</taxon>
        <taxon>Neisseriales</taxon>
        <taxon>Neisseriaceae</taxon>
        <taxon>Neisseria</taxon>
    </lineage>
</organism>
<keyword id="KW-0414">Isoprene biosynthesis</keyword>
<keyword id="KW-0460">Magnesium</keyword>
<keyword id="KW-0479">Metal-binding</keyword>
<keyword id="KW-0784">Thiamine biosynthesis</keyword>
<keyword id="KW-0786">Thiamine pyrophosphate</keyword>
<keyword id="KW-0808">Transferase</keyword>
<proteinExistence type="inferred from homology"/>